<protein>
    <recommendedName>
        <fullName evidence="1">Ribosomal protein L11 methyltransferase</fullName>
        <shortName evidence="1">L11 Mtase</shortName>
        <ecNumber evidence="1">2.1.1.-</ecNumber>
    </recommendedName>
</protein>
<comment type="function">
    <text evidence="1">Methylates ribosomal protein L11.</text>
</comment>
<comment type="catalytic activity">
    <reaction evidence="1">
        <text>L-lysyl-[protein] + 3 S-adenosyl-L-methionine = N(6),N(6),N(6)-trimethyl-L-lysyl-[protein] + 3 S-adenosyl-L-homocysteine + 3 H(+)</text>
        <dbReference type="Rhea" id="RHEA:54192"/>
        <dbReference type="Rhea" id="RHEA-COMP:9752"/>
        <dbReference type="Rhea" id="RHEA-COMP:13826"/>
        <dbReference type="ChEBI" id="CHEBI:15378"/>
        <dbReference type="ChEBI" id="CHEBI:29969"/>
        <dbReference type="ChEBI" id="CHEBI:57856"/>
        <dbReference type="ChEBI" id="CHEBI:59789"/>
        <dbReference type="ChEBI" id="CHEBI:61961"/>
    </reaction>
</comment>
<comment type="subcellular location">
    <subcellularLocation>
        <location evidence="1">Cytoplasm</location>
    </subcellularLocation>
</comment>
<comment type="similarity">
    <text evidence="1">Belongs to the methyltransferase superfamily. PrmA family.</text>
</comment>
<comment type="sequence caution" evidence="2">
    <conflict type="erroneous initiation">
        <sequence resource="EMBL-CDS" id="AAN70387"/>
    </conflict>
</comment>
<organism>
    <name type="scientific">Pseudomonas putida (strain ATCC 47054 / DSM 6125 / CFBP 8728 / NCIMB 11950 / KT2440)</name>
    <dbReference type="NCBI Taxonomy" id="160488"/>
    <lineage>
        <taxon>Bacteria</taxon>
        <taxon>Pseudomonadati</taxon>
        <taxon>Pseudomonadota</taxon>
        <taxon>Gammaproteobacteria</taxon>
        <taxon>Pseudomonadales</taxon>
        <taxon>Pseudomonadaceae</taxon>
        <taxon>Pseudomonas</taxon>
    </lineage>
</organism>
<accession>Q88DK7</accession>
<proteinExistence type="inferred from homology"/>
<sequence>MPWLQVRLAISPEQAETYEDALLEVGAVSVTFMDAEDQPIFEPDLNTTPLWSHTHLLALFEANADPEQVFAHLRLLTGAELPEHQAEVIEDQDWERSWMDNFQPMRFGRRLWIVPSWHDAPEKDAVNLLLDPGLAFGTGTHPTTALCLEWLDGQQLEGTQVLDFGCGSGILAIAALLLGAREAVGTDIDVQAIEASRDNAQRNGIADEKLALYLPEHMPAMQADVLVANILAGPLVSLAPQLSGLVRPGGLLALSGILAEQGEDVAAAYAADFELDPIVVRDGWVRISGRRR</sequence>
<gene>
    <name evidence="1" type="primary">prmA</name>
    <name type="ordered locus">PP_4818</name>
</gene>
<name>PRMA_PSEPK</name>
<reference key="1">
    <citation type="journal article" date="2002" name="Environ. Microbiol.">
        <title>Complete genome sequence and comparative analysis of the metabolically versatile Pseudomonas putida KT2440.</title>
        <authorList>
            <person name="Nelson K.E."/>
            <person name="Weinel C."/>
            <person name="Paulsen I.T."/>
            <person name="Dodson R.J."/>
            <person name="Hilbert H."/>
            <person name="Martins dos Santos V.A.P."/>
            <person name="Fouts D.E."/>
            <person name="Gill S.R."/>
            <person name="Pop M."/>
            <person name="Holmes M."/>
            <person name="Brinkac L.M."/>
            <person name="Beanan M.J."/>
            <person name="DeBoy R.T."/>
            <person name="Daugherty S.C."/>
            <person name="Kolonay J.F."/>
            <person name="Madupu R."/>
            <person name="Nelson W.C."/>
            <person name="White O."/>
            <person name="Peterson J.D."/>
            <person name="Khouri H.M."/>
            <person name="Hance I."/>
            <person name="Chris Lee P."/>
            <person name="Holtzapple E.K."/>
            <person name="Scanlan D."/>
            <person name="Tran K."/>
            <person name="Moazzez A."/>
            <person name="Utterback T.R."/>
            <person name="Rizzo M."/>
            <person name="Lee K."/>
            <person name="Kosack D."/>
            <person name="Moestl D."/>
            <person name="Wedler H."/>
            <person name="Lauber J."/>
            <person name="Stjepandic D."/>
            <person name="Hoheisel J."/>
            <person name="Straetz M."/>
            <person name="Heim S."/>
            <person name="Kiewitz C."/>
            <person name="Eisen J.A."/>
            <person name="Timmis K.N."/>
            <person name="Duesterhoeft A."/>
            <person name="Tuemmler B."/>
            <person name="Fraser C.M."/>
        </authorList>
    </citation>
    <scope>NUCLEOTIDE SEQUENCE [LARGE SCALE GENOMIC DNA]</scope>
    <source>
        <strain>ATCC 47054 / DSM 6125 / CFBP 8728 / NCIMB 11950 / KT2440</strain>
    </source>
</reference>
<evidence type="ECO:0000255" key="1">
    <source>
        <dbReference type="HAMAP-Rule" id="MF_00735"/>
    </source>
</evidence>
<evidence type="ECO:0000305" key="2"/>
<keyword id="KW-0963">Cytoplasm</keyword>
<keyword id="KW-0489">Methyltransferase</keyword>
<keyword id="KW-1185">Reference proteome</keyword>
<keyword id="KW-0949">S-adenosyl-L-methionine</keyword>
<keyword id="KW-0808">Transferase</keyword>
<feature type="chain" id="PRO_0000192293" description="Ribosomal protein L11 methyltransferase">
    <location>
        <begin position="1"/>
        <end position="292"/>
    </location>
</feature>
<feature type="binding site" evidence="1">
    <location>
        <position position="144"/>
    </location>
    <ligand>
        <name>S-adenosyl-L-methionine</name>
        <dbReference type="ChEBI" id="CHEBI:59789"/>
    </ligand>
</feature>
<feature type="binding site" evidence="1">
    <location>
        <position position="165"/>
    </location>
    <ligand>
        <name>S-adenosyl-L-methionine</name>
        <dbReference type="ChEBI" id="CHEBI:59789"/>
    </ligand>
</feature>
<feature type="binding site" evidence="1">
    <location>
        <position position="187"/>
    </location>
    <ligand>
        <name>S-adenosyl-L-methionine</name>
        <dbReference type="ChEBI" id="CHEBI:59789"/>
    </ligand>
</feature>
<feature type="binding site" evidence="1">
    <location>
        <position position="229"/>
    </location>
    <ligand>
        <name>S-adenosyl-L-methionine</name>
        <dbReference type="ChEBI" id="CHEBI:59789"/>
    </ligand>
</feature>
<dbReference type="EC" id="2.1.1.-" evidence="1"/>
<dbReference type="EMBL" id="AE015451">
    <property type="protein sequence ID" value="AAN70387.1"/>
    <property type="status" value="ALT_INIT"/>
    <property type="molecule type" value="Genomic_DNA"/>
</dbReference>
<dbReference type="RefSeq" id="NP_746923.3">
    <property type="nucleotide sequence ID" value="NC_002947.4"/>
</dbReference>
<dbReference type="RefSeq" id="WP_010955429.1">
    <property type="nucleotide sequence ID" value="NZ_CP169744.1"/>
</dbReference>
<dbReference type="SMR" id="Q88DK7"/>
<dbReference type="STRING" id="160488.PP_4818"/>
<dbReference type="PaxDb" id="160488-PP_4818"/>
<dbReference type="DNASU" id="1043073"/>
<dbReference type="GeneID" id="83682544"/>
<dbReference type="KEGG" id="ppu:PP_4818"/>
<dbReference type="PATRIC" id="fig|160488.4.peg.5141"/>
<dbReference type="eggNOG" id="COG2264">
    <property type="taxonomic scope" value="Bacteria"/>
</dbReference>
<dbReference type="HOGENOM" id="CLU_049382_4_1_6"/>
<dbReference type="OrthoDB" id="9785995at2"/>
<dbReference type="PhylomeDB" id="Q88DK7"/>
<dbReference type="Proteomes" id="UP000000556">
    <property type="component" value="Chromosome"/>
</dbReference>
<dbReference type="GO" id="GO:0005829">
    <property type="term" value="C:cytosol"/>
    <property type="evidence" value="ECO:0007669"/>
    <property type="project" value="TreeGrafter"/>
</dbReference>
<dbReference type="GO" id="GO:0016279">
    <property type="term" value="F:protein-lysine N-methyltransferase activity"/>
    <property type="evidence" value="ECO:0007669"/>
    <property type="project" value="TreeGrafter"/>
</dbReference>
<dbReference type="GO" id="GO:0032259">
    <property type="term" value="P:methylation"/>
    <property type="evidence" value="ECO:0007669"/>
    <property type="project" value="UniProtKB-KW"/>
</dbReference>
<dbReference type="Gene3D" id="3.40.50.150">
    <property type="entry name" value="Vaccinia Virus protein VP39"/>
    <property type="match status" value="1"/>
</dbReference>
<dbReference type="HAMAP" id="MF_00735">
    <property type="entry name" value="Methyltr_PrmA"/>
    <property type="match status" value="1"/>
</dbReference>
<dbReference type="InterPro" id="IPR050078">
    <property type="entry name" value="Ribosomal_L11_MeTrfase_PrmA"/>
</dbReference>
<dbReference type="InterPro" id="IPR004498">
    <property type="entry name" value="Ribosomal_PrmA_MeTrfase"/>
</dbReference>
<dbReference type="InterPro" id="IPR029063">
    <property type="entry name" value="SAM-dependent_MTases_sf"/>
</dbReference>
<dbReference type="NCBIfam" id="TIGR00406">
    <property type="entry name" value="prmA"/>
    <property type="match status" value="1"/>
</dbReference>
<dbReference type="PANTHER" id="PTHR43648">
    <property type="entry name" value="ELECTRON TRANSFER FLAVOPROTEIN BETA SUBUNIT LYSINE METHYLTRANSFERASE"/>
    <property type="match status" value="1"/>
</dbReference>
<dbReference type="PANTHER" id="PTHR43648:SF1">
    <property type="entry name" value="ELECTRON TRANSFER FLAVOPROTEIN BETA SUBUNIT LYSINE METHYLTRANSFERASE"/>
    <property type="match status" value="1"/>
</dbReference>
<dbReference type="Pfam" id="PF06325">
    <property type="entry name" value="PrmA"/>
    <property type="match status" value="1"/>
</dbReference>
<dbReference type="PIRSF" id="PIRSF000401">
    <property type="entry name" value="RPL11_MTase"/>
    <property type="match status" value="1"/>
</dbReference>
<dbReference type="SUPFAM" id="SSF53335">
    <property type="entry name" value="S-adenosyl-L-methionine-dependent methyltransferases"/>
    <property type="match status" value="1"/>
</dbReference>